<evidence type="ECO:0000255" key="1">
    <source>
        <dbReference type="HAMAP-Rule" id="MF_00827"/>
    </source>
</evidence>
<comment type="similarity">
    <text evidence="1">Belongs to the UPF0386 family.</text>
</comment>
<gene>
    <name evidence="1" type="primary">yjhX</name>
    <name type="ordered locus">ECS88_4922</name>
</gene>
<sequence>MNLSRQEQHTLHVLAKGRRIAHVRDSSGRVTSVECYSREGLLLTDCTLAVFKKLKTKKLIKSVNGQPYRINTTELNKVRAQLDNR</sequence>
<name>YJHX_ECO45</name>
<proteinExistence type="inferred from homology"/>
<organism>
    <name type="scientific">Escherichia coli O45:K1 (strain S88 / ExPEC)</name>
    <dbReference type="NCBI Taxonomy" id="585035"/>
    <lineage>
        <taxon>Bacteria</taxon>
        <taxon>Pseudomonadati</taxon>
        <taxon>Pseudomonadota</taxon>
        <taxon>Gammaproteobacteria</taxon>
        <taxon>Enterobacterales</taxon>
        <taxon>Enterobacteriaceae</taxon>
        <taxon>Escherichia</taxon>
    </lineage>
</organism>
<accession>B7MMJ4</accession>
<reference key="1">
    <citation type="journal article" date="2009" name="PLoS Genet.">
        <title>Organised genome dynamics in the Escherichia coli species results in highly diverse adaptive paths.</title>
        <authorList>
            <person name="Touchon M."/>
            <person name="Hoede C."/>
            <person name="Tenaillon O."/>
            <person name="Barbe V."/>
            <person name="Baeriswyl S."/>
            <person name="Bidet P."/>
            <person name="Bingen E."/>
            <person name="Bonacorsi S."/>
            <person name="Bouchier C."/>
            <person name="Bouvet O."/>
            <person name="Calteau A."/>
            <person name="Chiapello H."/>
            <person name="Clermont O."/>
            <person name="Cruveiller S."/>
            <person name="Danchin A."/>
            <person name="Diard M."/>
            <person name="Dossat C."/>
            <person name="Karoui M.E."/>
            <person name="Frapy E."/>
            <person name="Garry L."/>
            <person name="Ghigo J.M."/>
            <person name="Gilles A.M."/>
            <person name="Johnson J."/>
            <person name="Le Bouguenec C."/>
            <person name="Lescat M."/>
            <person name="Mangenot S."/>
            <person name="Martinez-Jehanne V."/>
            <person name="Matic I."/>
            <person name="Nassif X."/>
            <person name="Oztas S."/>
            <person name="Petit M.A."/>
            <person name="Pichon C."/>
            <person name="Rouy Z."/>
            <person name="Ruf C.S."/>
            <person name="Schneider D."/>
            <person name="Tourret J."/>
            <person name="Vacherie B."/>
            <person name="Vallenet D."/>
            <person name="Medigue C."/>
            <person name="Rocha E.P.C."/>
            <person name="Denamur E."/>
        </authorList>
    </citation>
    <scope>NUCLEOTIDE SEQUENCE [LARGE SCALE GENOMIC DNA]</scope>
    <source>
        <strain>S88 / ExPEC</strain>
    </source>
</reference>
<dbReference type="EMBL" id="CU928161">
    <property type="protein sequence ID" value="CAR06066.1"/>
    <property type="molecule type" value="Genomic_DNA"/>
</dbReference>
<dbReference type="RefSeq" id="WP_001054376.1">
    <property type="nucleotide sequence ID" value="NC_011742.1"/>
</dbReference>
<dbReference type="KEGG" id="ecz:ECS88_4922"/>
<dbReference type="HOGENOM" id="CLU_164736_0_0_6"/>
<dbReference type="Proteomes" id="UP000000747">
    <property type="component" value="Chromosome"/>
</dbReference>
<dbReference type="HAMAP" id="MF_00827">
    <property type="entry name" value="UPF0386"/>
    <property type="match status" value="1"/>
</dbReference>
<dbReference type="InterPro" id="IPR018654">
    <property type="entry name" value="YjhX_toxin"/>
</dbReference>
<dbReference type="NCBIfam" id="NF010240">
    <property type="entry name" value="PRK13687.1"/>
    <property type="match status" value="1"/>
</dbReference>
<dbReference type="Pfam" id="PF09857">
    <property type="entry name" value="YjhX_toxin"/>
    <property type="match status" value="1"/>
</dbReference>
<protein>
    <recommendedName>
        <fullName evidence="1">UPF0386 protein YjhX</fullName>
    </recommendedName>
</protein>
<feature type="chain" id="PRO_1000200703" description="UPF0386 protein YjhX">
    <location>
        <begin position="1"/>
        <end position="85"/>
    </location>
</feature>
<keyword id="KW-1185">Reference proteome</keyword>